<accession>A1A947</accession>
<keyword id="KW-0963">Cytoplasm</keyword>
<keyword id="KW-0489">Methyltransferase</keyword>
<keyword id="KW-1185">Reference proteome</keyword>
<keyword id="KW-0698">rRNA processing</keyword>
<keyword id="KW-0949">S-adenosyl-L-methionine</keyword>
<keyword id="KW-0808">Transferase</keyword>
<name>RLMF_ECOK1</name>
<reference key="1">
    <citation type="journal article" date="2007" name="J. Bacteriol.">
        <title>The genome sequence of avian pathogenic Escherichia coli strain O1:K1:H7 shares strong similarities with human extraintestinal pathogenic E. coli genomes.</title>
        <authorList>
            <person name="Johnson T.J."/>
            <person name="Kariyawasam S."/>
            <person name="Wannemuehler Y."/>
            <person name="Mangiamele P."/>
            <person name="Johnson S.J."/>
            <person name="Doetkott C."/>
            <person name="Skyberg J.A."/>
            <person name="Lynne A.M."/>
            <person name="Johnson J.R."/>
            <person name="Nolan L.K."/>
        </authorList>
    </citation>
    <scope>NUCLEOTIDE SEQUENCE [LARGE SCALE GENOMIC DNA]</scope>
</reference>
<sequence>MSAQKPGLHPRNRHHSRYDLATLCQVNPELRQFLTLTPAGEQSVDFANPLAVKALNKALLAHFYAVANWDIPDGFLCPPVPGRADYIHHLADLLAEASGTIPANASILDIGVGANCIYPLIGVHEYGWRFTGSETSSQALSSAQAIISANPGLNRAIRLRRQKESGAIFNGIIHKNEQYDATLCNPPFHDSAAAARAGSERKRRNLGLNKDDALNFGGQQQELWCEGGEVAFIKKMIEESKGFAKQVMWFTSLVSRGENLPPLYRALTDVGAVKVVKKEMAQGQKQSRFIAWTFMNDEQRRRFVNRQR</sequence>
<comment type="function">
    <text evidence="1">Specifically methylates the adenine in position 1618 of 23S rRNA.</text>
</comment>
<comment type="catalytic activity">
    <reaction evidence="1">
        <text>adenosine(1618) in 23S rRNA + S-adenosyl-L-methionine = N(6)-methyladenosine(1618) in 23S rRNA + S-adenosyl-L-homocysteine + H(+)</text>
        <dbReference type="Rhea" id="RHEA:16497"/>
        <dbReference type="Rhea" id="RHEA-COMP:10229"/>
        <dbReference type="Rhea" id="RHEA-COMP:10231"/>
        <dbReference type="ChEBI" id="CHEBI:15378"/>
        <dbReference type="ChEBI" id="CHEBI:57856"/>
        <dbReference type="ChEBI" id="CHEBI:59789"/>
        <dbReference type="ChEBI" id="CHEBI:74411"/>
        <dbReference type="ChEBI" id="CHEBI:74449"/>
        <dbReference type="EC" id="2.1.1.181"/>
    </reaction>
</comment>
<comment type="subcellular location">
    <subcellularLocation>
        <location evidence="1">Cytoplasm</location>
    </subcellularLocation>
</comment>
<comment type="similarity">
    <text evidence="1">Belongs to the methyltransferase superfamily. METTL16/RlmF family.</text>
</comment>
<comment type="sequence caution" evidence="2">
    <conflict type="erroneous initiation">
        <sequence resource="EMBL-CDS" id="ABJ00187"/>
    </conflict>
</comment>
<gene>
    <name evidence="1" type="primary">rlmF</name>
    <name type="ordered locus">Ecok1_06930</name>
    <name type="ORF">APECO1_1284</name>
</gene>
<protein>
    <recommendedName>
        <fullName evidence="1">Ribosomal RNA large subunit methyltransferase F</fullName>
        <ecNumber evidence="1">2.1.1.181</ecNumber>
    </recommendedName>
    <alternativeName>
        <fullName evidence="1">23S rRNA mA1618 methyltransferase</fullName>
    </alternativeName>
    <alternativeName>
        <fullName evidence="1">rRNA adenine N-6-methyltransferase</fullName>
    </alternativeName>
</protein>
<dbReference type="EC" id="2.1.1.181" evidence="1"/>
<dbReference type="EMBL" id="CP000468">
    <property type="protein sequence ID" value="ABJ00187.1"/>
    <property type="status" value="ALT_INIT"/>
    <property type="molecule type" value="Genomic_DNA"/>
</dbReference>
<dbReference type="RefSeq" id="WP_001275941.1">
    <property type="nucleotide sequence ID" value="NZ_CADILS010000026.1"/>
</dbReference>
<dbReference type="SMR" id="A1A947"/>
<dbReference type="GeneID" id="93776621"/>
<dbReference type="KEGG" id="ecv:APECO1_1284"/>
<dbReference type="HOGENOM" id="CLU_027534_3_0_6"/>
<dbReference type="Proteomes" id="UP000008216">
    <property type="component" value="Chromosome"/>
</dbReference>
<dbReference type="GO" id="GO:0005737">
    <property type="term" value="C:cytoplasm"/>
    <property type="evidence" value="ECO:0007669"/>
    <property type="project" value="UniProtKB-SubCell"/>
</dbReference>
<dbReference type="GO" id="GO:0052907">
    <property type="term" value="F:23S rRNA (adenine(1618)-N(6))-methyltransferase activity"/>
    <property type="evidence" value="ECO:0007669"/>
    <property type="project" value="UniProtKB-EC"/>
</dbReference>
<dbReference type="GO" id="GO:0070475">
    <property type="term" value="P:rRNA base methylation"/>
    <property type="evidence" value="ECO:0007669"/>
    <property type="project" value="TreeGrafter"/>
</dbReference>
<dbReference type="FunFam" id="3.40.50.150:FF:000045">
    <property type="entry name" value="Ribosomal RNA large subunit methyltransferase F"/>
    <property type="match status" value="1"/>
</dbReference>
<dbReference type="Gene3D" id="3.40.50.150">
    <property type="entry name" value="Vaccinia Virus protein VP39"/>
    <property type="match status" value="1"/>
</dbReference>
<dbReference type="HAMAP" id="MF_01848">
    <property type="entry name" value="23SrRNA_methyltr_F"/>
    <property type="match status" value="1"/>
</dbReference>
<dbReference type="InterPro" id="IPR010286">
    <property type="entry name" value="METTL16/RlmF"/>
</dbReference>
<dbReference type="InterPro" id="IPR016909">
    <property type="entry name" value="rRNA_lsu_MeTfrase_F"/>
</dbReference>
<dbReference type="InterPro" id="IPR029063">
    <property type="entry name" value="SAM-dependent_MTases_sf"/>
</dbReference>
<dbReference type="NCBIfam" id="NF008725">
    <property type="entry name" value="PRK11727.1"/>
    <property type="match status" value="1"/>
</dbReference>
<dbReference type="PANTHER" id="PTHR13393:SF0">
    <property type="entry name" value="RNA N6-ADENOSINE-METHYLTRANSFERASE METTL16"/>
    <property type="match status" value="1"/>
</dbReference>
<dbReference type="PANTHER" id="PTHR13393">
    <property type="entry name" value="SAM-DEPENDENT METHYLTRANSFERASE"/>
    <property type="match status" value="1"/>
</dbReference>
<dbReference type="Pfam" id="PF05971">
    <property type="entry name" value="Methyltransf_10"/>
    <property type="match status" value="1"/>
</dbReference>
<dbReference type="PIRSF" id="PIRSF029038">
    <property type="entry name" value="Mtase_YbiN_prd"/>
    <property type="match status" value="1"/>
</dbReference>
<dbReference type="SUPFAM" id="SSF53335">
    <property type="entry name" value="S-adenosyl-L-methionine-dependent methyltransferases"/>
    <property type="match status" value="1"/>
</dbReference>
<feature type="chain" id="PRO_0000349912" description="Ribosomal RNA large subunit methyltransferase F">
    <location>
        <begin position="1"/>
        <end position="308"/>
    </location>
</feature>
<proteinExistence type="inferred from homology"/>
<organism>
    <name type="scientific">Escherichia coli O1:K1 / APEC</name>
    <dbReference type="NCBI Taxonomy" id="405955"/>
    <lineage>
        <taxon>Bacteria</taxon>
        <taxon>Pseudomonadati</taxon>
        <taxon>Pseudomonadota</taxon>
        <taxon>Gammaproteobacteria</taxon>
        <taxon>Enterobacterales</taxon>
        <taxon>Enterobacteriaceae</taxon>
        <taxon>Escherichia</taxon>
    </lineage>
</organism>
<evidence type="ECO:0000255" key="1">
    <source>
        <dbReference type="HAMAP-Rule" id="MF_01848"/>
    </source>
</evidence>
<evidence type="ECO:0000305" key="2"/>